<proteinExistence type="evidence at protein level"/>
<gene>
    <name type="primary">Clnk</name>
    <name type="synonym">Mist</name>
</gene>
<dbReference type="EMBL" id="AF187819">
    <property type="protein sequence ID" value="AAF14299.1"/>
    <property type="molecule type" value="mRNA"/>
</dbReference>
<dbReference type="EMBL" id="AB021220">
    <property type="protein sequence ID" value="BAA96240.1"/>
    <property type="molecule type" value="mRNA"/>
</dbReference>
<dbReference type="EMBL" id="BC125637">
    <property type="protein sequence ID" value="AAI25638.1"/>
    <property type="molecule type" value="mRNA"/>
</dbReference>
<dbReference type="EMBL" id="BC125639">
    <property type="protein sequence ID" value="AAI25640.1"/>
    <property type="molecule type" value="mRNA"/>
</dbReference>
<dbReference type="EMBL" id="AK082826">
    <property type="protein sequence ID" value="BAC38640.2"/>
    <property type="status" value="ALT_INIT"/>
    <property type="molecule type" value="mRNA"/>
</dbReference>
<dbReference type="CCDS" id="CCDS51486.1">
    <molecule id="Q9QZE2-1"/>
</dbReference>
<dbReference type="RefSeq" id="NP_038776.3">
    <molecule id="Q9QZE2-1"/>
    <property type="nucleotide sequence ID" value="NM_013748.3"/>
</dbReference>
<dbReference type="RefSeq" id="XP_006504037.1">
    <molecule id="Q9QZE2-1"/>
    <property type="nucleotide sequence ID" value="XM_006503974.3"/>
</dbReference>
<dbReference type="RefSeq" id="XP_011239036.1">
    <molecule id="Q9QZE2-2"/>
    <property type="nucleotide sequence ID" value="XM_011240734.2"/>
</dbReference>
<dbReference type="SMR" id="Q9QZE2"/>
<dbReference type="BioGRID" id="205158">
    <property type="interactions" value="1"/>
</dbReference>
<dbReference type="FunCoup" id="Q9QZE2">
    <property type="interactions" value="56"/>
</dbReference>
<dbReference type="IntAct" id="Q9QZE2">
    <property type="interactions" value="1"/>
</dbReference>
<dbReference type="MINT" id="Q9QZE2"/>
<dbReference type="STRING" id="10090.ENSMUSP00000128473"/>
<dbReference type="iPTMnet" id="Q9QZE2"/>
<dbReference type="PhosphoSitePlus" id="Q9QZE2"/>
<dbReference type="jPOST" id="Q9QZE2"/>
<dbReference type="PaxDb" id="10090-ENSMUSP00000132779"/>
<dbReference type="ProteomicsDB" id="279116">
    <molecule id="Q9QZE2-1"/>
</dbReference>
<dbReference type="ProteomicsDB" id="279117">
    <molecule id="Q9QZE2-2"/>
</dbReference>
<dbReference type="TopDownProteomics" id="Q9QZE2-1">
    <molecule id="Q9QZE2-1"/>
</dbReference>
<dbReference type="Antibodypedia" id="50006">
    <property type="antibodies" value="71 antibodies from 11 providers"/>
</dbReference>
<dbReference type="Ensembl" id="ENSMUST00000169819.5">
    <molecule id="Q9QZE2-1"/>
    <property type="protein sequence ID" value="ENSMUSP00000128473.2"/>
    <property type="gene ID" value="ENSMUSG00000039315.17"/>
</dbReference>
<dbReference type="GeneID" id="27278"/>
<dbReference type="KEGG" id="mmu:27278"/>
<dbReference type="UCSC" id="uc008xgv.2">
    <molecule id="Q9QZE2-1"/>
    <property type="organism name" value="mouse"/>
</dbReference>
<dbReference type="AGR" id="MGI:1351468"/>
<dbReference type="CTD" id="116449"/>
<dbReference type="MGI" id="MGI:1351468">
    <property type="gene designation" value="Clnk"/>
</dbReference>
<dbReference type="VEuPathDB" id="HostDB:ENSMUSG00000039315"/>
<dbReference type="eggNOG" id="ENOG502S0EU">
    <property type="taxonomic scope" value="Eukaryota"/>
</dbReference>
<dbReference type="GeneTree" id="ENSGT00940000161846"/>
<dbReference type="HOGENOM" id="CLU_052668_0_0_1"/>
<dbReference type="InParanoid" id="Q9QZE2"/>
<dbReference type="OMA" id="NTGWRKP"/>
<dbReference type="OrthoDB" id="9945442at2759"/>
<dbReference type="PhylomeDB" id="Q9QZE2"/>
<dbReference type="BioGRID-ORCS" id="27278">
    <property type="hits" value="3 hits in 78 CRISPR screens"/>
</dbReference>
<dbReference type="ChiTaRS" id="Clnk">
    <property type="organism name" value="mouse"/>
</dbReference>
<dbReference type="PRO" id="PR:Q9QZE2"/>
<dbReference type="Proteomes" id="UP000000589">
    <property type="component" value="Chromosome 5"/>
</dbReference>
<dbReference type="RNAct" id="Q9QZE2">
    <property type="molecule type" value="protein"/>
</dbReference>
<dbReference type="Bgee" id="ENSMUSG00000039315">
    <property type="expression patterns" value="Expressed in mesodermal cell in embryo and 12 other cell types or tissues"/>
</dbReference>
<dbReference type="ExpressionAtlas" id="Q9QZE2">
    <property type="expression patterns" value="baseline and differential"/>
</dbReference>
<dbReference type="GO" id="GO:0042629">
    <property type="term" value="C:mast cell granule"/>
    <property type="evidence" value="ECO:0000314"/>
    <property type="project" value="UniProtKB"/>
</dbReference>
<dbReference type="GO" id="GO:0032991">
    <property type="term" value="C:protein-containing complex"/>
    <property type="evidence" value="ECO:0000315"/>
    <property type="project" value="UniProtKB"/>
</dbReference>
<dbReference type="GO" id="GO:0044877">
    <property type="term" value="F:protein-containing complex binding"/>
    <property type="evidence" value="ECO:0000353"/>
    <property type="project" value="UniProtKB"/>
</dbReference>
<dbReference type="GO" id="GO:0007169">
    <property type="term" value="P:cell surface receptor protein tyrosine kinase signaling pathway"/>
    <property type="evidence" value="ECO:0000314"/>
    <property type="project" value="MGI"/>
</dbReference>
<dbReference type="GO" id="GO:0006955">
    <property type="term" value="P:immune response"/>
    <property type="evidence" value="ECO:0000303"/>
    <property type="project" value="UniProtKB"/>
</dbReference>
<dbReference type="GO" id="GO:0035556">
    <property type="term" value="P:intracellular signal transduction"/>
    <property type="evidence" value="ECO:0000315"/>
    <property type="project" value="UniProtKB"/>
</dbReference>
<dbReference type="GO" id="GO:0043303">
    <property type="term" value="P:mast cell degranulation"/>
    <property type="evidence" value="ECO:0000315"/>
    <property type="project" value="UniProtKB"/>
</dbReference>
<dbReference type="GO" id="GO:0032815">
    <property type="term" value="P:negative regulation of natural killer cell activation"/>
    <property type="evidence" value="ECO:0000315"/>
    <property type="project" value="UniProtKB"/>
</dbReference>
<dbReference type="GO" id="GO:0002729">
    <property type="term" value="P:positive regulation of natural killer cell cytokine production"/>
    <property type="evidence" value="ECO:0000315"/>
    <property type="project" value="UniProtKB"/>
</dbReference>
<dbReference type="FunFam" id="3.30.505.10:FF:000016">
    <property type="entry name" value="B-cell linker protein isoform 2"/>
    <property type="match status" value="1"/>
</dbReference>
<dbReference type="Gene3D" id="3.30.505.10">
    <property type="entry name" value="SH2 domain"/>
    <property type="match status" value="1"/>
</dbReference>
<dbReference type="InterPro" id="IPR051751">
    <property type="entry name" value="Immunoreceptor_sig_adapters"/>
</dbReference>
<dbReference type="InterPro" id="IPR000980">
    <property type="entry name" value="SH2"/>
</dbReference>
<dbReference type="InterPro" id="IPR036860">
    <property type="entry name" value="SH2_dom_sf"/>
</dbReference>
<dbReference type="PANTHER" id="PTHR14098:SF2">
    <property type="entry name" value="CYTOKINE-DEPENDENT HEMATOPOIETIC CELL LINKER"/>
    <property type="match status" value="1"/>
</dbReference>
<dbReference type="PANTHER" id="PTHR14098">
    <property type="entry name" value="SH2 DOMAIN CONTAINING PROTEIN"/>
    <property type="match status" value="1"/>
</dbReference>
<dbReference type="Pfam" id="PF00017">
    <property type="entry name" value="SH2"/>
    <property type="match status" value="1"/>
</dbReference>
<dbReference type="PRINTS" id="PR00401">
    <property type="entry name" value="SH2DOMAIN"/>
</dbReference>
<dbReference type="SMART" id="SM00252">
    <property type="entry name" value="SH2"/>
    <property type="match status" value="1"/>
</dbReference>
<dbReference type="SUPFAM" id="SSF55550">
    <property type="entry name" value="SH2 domain"/>
    <property type="match status" value="1"/>
</dbReference>
<dbReference type="PROSITE" id="PS50001">
    <property type="entry name" value="SH2"/>
    <property type="match status" value="1"/>
</dbReference>
<organism>
    <name type="scientific">Mus musculus</name>
    <name type="common">Mouse</name>
    <dbReference type="NCBI Taxonomy" id="10090"/>
    <lineage>
        <taxon>Eukaryota</taxon>
        <taxon>Metazoa</taxon>
        <taxon>Chordata</taxon>
        <taxon>Craniata</taxon>
        <taxon>Vertebrata</taxon>
        <taxon>Euteleostomi</taxon>
        <taxon>Mammalia</taxon>
        <taxon>Eutheria</taxon>
        <taxon>Euarchontoglires</taxon>
        <taxon>Glires</taxon>
        <taxon>Rodentia</taxon>
        <taxon>Myomorpha</taxon>
        <taxon>Muroidea</taxon>
        <taxon>Muridae</taxon>
        <taxon>Murinae</taxon>
        <taxon>Mus</taxon>
        <taxon>Mus</taxon>
    </lineage>
</organism>
<protein>
    <recommendedName>
        <fullName evidence="12">Cytokine-dependent hematopoietic cell linker</fullName>
    </recommendedName>
    <alternativeName>
        <fullName evidence="1">Mast cell immunoreceptor signal transducer</fullName>
    </alternativeName>
</protein>
<feature type="chain" id="PRO_0000314598" description="Cytokine-dependent hematopoietic cell linker">
    <location>
        <begin position="1"/>
        <end position="435"/>
    </location>
</feature>
<feature type="domain" description="SH2" evidence="2">
    <location>
        <begin position="309"/>
        <end position="418"/>
    </location>
</feature>
<feature type="region of interest" description="Disordered" evidence="3">
    <location>
        <begin position="155"/>
        <end position="303"/>
    </location>
</feature>
<feature type="region of interest" description="Mediates interaction with PLCG1; essential for BCR signaling; involved in restoration of BCR-induced calcium response and ERK2 and JNK2 activation in BLNK-deficient cells expressing LAT" evidence="6">
    <location>
        <begin position="160"/>
        <end position="165"/>
    </location>
</feature>
<feature type="region of interest" description="Mediates interaction with LAT, GRB2, and FGR; involved in translocation to the glycolipid-enriched microdomain and restoration of BCR-induced calcium response in BLNK-deficient DT40 cells expressing LAT" evidence="6 10">
    <location>
        <begin position="178"/>
        <end position="182"/>
    </location>
</feature>
<feature type="compositionally biased region" description="Polar residues" evidence="3">
    <location>
        <begin position="226"/>
        <end position="249"/>
    </location>
</feature>
<feature type="compositionally biased region" description="Basic and acidic residues" evidence="3">
    <location>
        <begin position="290"/>
        <end position="303"/>
    </location>
</feature>
<feature type="site" description="Interaction with FYB1" evidence="8">
    <location>
        <position position="335"/>
    </location>
</feature>
<feature type="modified residue" description="Phosphotyrosine; by LYN" evidence="6 14">
    <location>
        <position position="69"/>
    </location>
</feature>
<feature type="modified residue" description="Phosphotyrosine; by LYN" evidence="6">
    <location>
        <position position="96"/>
    </location>
</feature>
<feature type="splice variant" id="VSP_030334" description="In isoform 2." evidence="13">
    <location>
        <begin position="5"/>
        <end position="28"/>
    </location>
</feature>
<feature type="mutagenesis site" description="Loss of phosphorylation and loss of interaction with PLCG1, PLCG2 and VAV. No effect on the suppression of natural killer cell activation and suppression of interferon-gamma production; when associated with F-96, F-101, F-153, F-174 and F-188." evidence="5 6 10">
    <original>Y</original>
    <variation>F</variation>
    <location>
        <position position="69"/>
    </location>
</feature>
<feature type="mutagenesis site" description="Loss of phosphorylation and loss of interaction with PLCG1, PLCG2 and VAV. No effect on the suppression of natural killer cell activation and suppression of interferon-gamma production; when associated with F-69, F-101, F-153, F-174 and F-188." evidence="5 6 10">
    <original>Y</original>
    <variation>F</variation>
    <location>
        <position position="96"/>
    </location>
</feature>
<feature type="mutagenesis site" description="Loss of phosphorylation and loss of interaction with PLCG1, PLCG2 and VAV. No effect on the suppression of natural killer cell activation and suppression of interferon-gamma production; when associated with F-69, F-96, F-153, F-174 and F-188." evidence="5 6 10">
    <original>Y</original>
    <variation>F</variation>
    <location>
        <position position="101"/>
    </location>
</feature>
<feature type="mutagenesis site" description="Loss of phosphorylation and loss of interaction with PLCG1, PLCG2 and VAV. No effect on the suppression of natural killer cell activation and suppression of interferon-gamma production; when associated with F-69, F-96, F-101, F-174 and F-188." evidence="5 6 10">
    <original>Y</original>
    <variation>F</variation>
    <location>
        <position position="153"/>
    </location>
</feature>
<feature type="mutagenesis site" description="Slightly increases natural killer cell activation and interferon-gamma production." evidence="10">
    <location>
        <begin position="160"/>
        <end position="165"/>
    </location>
</feature>
<feature type="mutagenesis site" description="Loss of phosphorylation and loss of interaction with PLCG1, PLCG2 and VAV. No effect on the suppression of natural killer cell activation and suppression of interferon-gamma production; when associated with F-69, F-96, F-101, F-153 and F-188." evidence="5 6 10">
    <original>Y</original>
    <variation>F</variation>
    <location>
        <position position="174"/>
    </location>
</feature>
<feature type="mutagenesis site" description="Increases natural killer cell activation and interferon-gamma production. Loss of FGR binding." evidence="10">
    <location>
        <begin position="178"/>
        <end position="182"/>
    </location>
</feature>
<feature type="mutagenesis site" description="Loss of phosphorylation and loss of interaction with PLCG1, PLCG2 and VAV. No effect on the suppression of natural killer cell activation and suppression of interferon-gamma production; when associated with F-69, F-96, F-101, F-153 and F-174." evidence="5 6 10">
    <original>Y</original>
    <variation>F</variation>
    <location>
        <position position="188"/>
    </location>
</feature>
<feature type="mutagenesis site" description="Loss of binding to FYB1 and MAP4K1. Reduced tyrosine phosphorylation. No effect on the suppression of natural killer cell activation and suppression of interferon-gamma production." evidence="8 10">
    <original>R</original>
    <variation>K</variation>
    <location>
        <position position="335"/>
    </location>
</feature>
<feature type="sequence conflict" description="In Ref. 2; BAA96240 and 3; AAI25638." evidence="13" ref="2 3">
    <original>T</original>
    <variation>M</variation>
    <location>
        <position position="105"/>
    </location>
</feature>
<feature type="sequence conflict" description="In Ref. 2; BAA96240 and 3; AAI25638." evidence="13" ref="2 3">
    <original>H</original>
    <variation>Q</variation>
    <location>
        <position position="131"/>
    </location>
</feature>
<feature type="sequence conflict" description="In Ref. 4; BAC38640." evidence="13" ref="4">
    <original>C</original>
    <variation>R</variation>
    <location>
        <position position="337"/>
    </location>
</feature>
<comment type="function">
    <text evidence="4 5 6 7 8 9 10 11">An adapter protein which plays a role in the regulation of immunoreceptor signaling, including PLC-gamma-mediated B-cell antigen receptor (BCR) signaling and FC-epsilon R1-mediated mast cell degranulation (PubMed:10562326, PubMed:10744659, PubMed:11509653, PubMed:12681493). Together with FGR, it acts as a negative regulator of natural killer cell-activating receptors and inhibits interferon-gamma production (PubMed:15199160, PubMed:16439675). Acts as a positive regulator of both T-cell receptor and natural killer T (NKT) cell receptor signaling in CD4-positive NKT cells (PubMed:16439675). Together with MAP4K1, it enhances CD3-triggered activation of T-cells and subsequent IL2 production (PubMed:11509653). May be involved in tumor necrosis factor induced cell death by promoting reactive oxidative species generation, and MLKL oligomerization, ultimately leading to necrosis (PubMed:26009488). Involved in phosphorylation of LAT (PubMed:11463797). May be involved in high affinity immunoglobulin epsilon receptor signaling in mast cells (PubMed:12681493).</text>
</comment>
<comment type="subunit">
    <text evidence="4 5 6 7 8 10 11">When phosphorylated, interacts with PLCG1, PLCG2, GRB2, VAV and LAT (PubMed:10744659, PubMed:11463797). Associated with a tyrosine-phosphorylated polypeptide (p92) in response to immunoreceptor stimulation (PubMed:10562326). Interacts with LBR and AGO2 (PubMed:26009488). Interacts with FGR (PubMed:16439675). Part of a complex consisting of CLNK, SKAP1 and FYB1 (PubMed:12681493). Interacts (via SH2 domain) with FYB1; this interaction allows SKAP1 and FYB1 to promote tyrosine phosphorylation of CLNK by LYN (PubMed:26009488). Interacts (via SH2 domain) with MAP4K1 (PubMed:11509653).</text>
</comment>
<comment type="interaction">
    <interactant intactId="EBI-8040679">
        <id>Q9QZE2</id>
    </interactant>
    <interactant intactId="EBI-7587024">
        <id>P14234</id>
        <label>Fgr</label>
    </interactant>
    <organismsDiffer>false</organismsDiffer>
    <experiments>3</experiments>
</comment>
<comment type="subcellular location">
    <subcellularLocation>
        <location evidence="1">Cytoplasm</location>
    </subcellularLocation>
</comment>
<comment type="alternative products">
    <event type="alternative splicing"/>
    <isoform>
        <id>Q9QZE2-1</id>
        <name>1</name>
        <sequence type="displayed"/>
    </isoform>
    <isoform>
        <id>Q9QZE2-2</id>
        <name>2</name>
        <sequence type="described" ref="VSP_030334"/>
    </isoform>
</comment>
<comment type="tissue specificity">
    <text evidence="4 5 7 9 10">Expressed in T-cells, mast cells, natural killer and natural killer T cells (at protein level) (PubMed:10744659, PubMed:11509653, PubMed:15199160, PubMed:16439675). Expressed in cytokine-stimulated hemopoietic cells (PubMed:10562326).</text>
</comment>
<comment type="induction">
    <text evidence="4 9 10">By cytokines such as IL2 and IL3 (PubMed:10562326, PubMed:15199160, PubMed:16439675). In natural killer T cells, by alpha-galactoceramide (PubMed:16439675).</text>
</comment>
<comment type="domain">
    <text evidence="6">The N-terminal proline-rich region interacts with the SH3 domain of PLCG1.</text>
</comment>
<comment type="domain">
    <text evidence="6">The SH2 domain is important for restoration of BCR-induced calcium response and JNK2 activation in BLNK-deficient DT40 cells expressing LAT.</text>
</comment>
<comment type="PTM">
    <text evidence="5 6 8">Tyrosine-phosphorylated upon BCR cross-linking (PubMed:10744659, PubMed:11463797). Tyrosine phosphorylation at both Tyr-69 and Tyr-96 are required for BCR-induced calcium response and are essential to restore PLCG2-mediated signaling in BLNK-deficient DT40 cells, but this phosphorylation is dispensable in cells expressing LAT (PubMed:10744659, PubMed:11463797). Interacts with the SH2 domain of PLCG1 via phosphorylated Tyr-96 (PubMed:10744659, PubMed:11463797). Tyrosine phosphorylation is increased when complexed with SKAP1 and FYB1 (PubMed:12681493).</text>
</comment>
<comment type="disruption phenotype">
    <text evidence="9 10">No visible phenotype.</text>
</comment>
<comment type="sequence caution" evidence="13">
    <conflict type="erroneous initiation">
        <sequence resource="EMBL-CDS" id="BAC38640"/>
    </conflict>
</comment>
<sequence>MTSQGNKRTTKEGFGDLRFQNVSLLKNRSWPSLSSAKGRCRAVLEPLPDHRRNLAGVPGGEKCNSNNDYEDPEFQLLKAWPSMKILPARPIQESEYADTRYFQDTMEAPLLLPPKASVSTERQTRDVRMTHLEEVDKPTFKDVRSQRFKGFKYTKINKTPLPPPRPAITLPKKYQPLPPAPPEESSAYFAPKPTFPEVQRGPRQRSAKDFSRVLGAEEESHHQTKPESSCPSSNQNTQKSPPAIASSSYMPGKHSIQARDHTGSMQHCPAQRCQAAASHSPRMLPYENTNSEKPDPTKPDEKDVWQNEWYIGEYSRQAVEDVLMKENKDGTFLVRDCSTKSKAEPYVLVVFYGNKVYNVKIRFLESNQQFALGTGLRGNEMFDSVEDIIEHYTYFPILLIDGKDKAARRKQCYLTQPLPLARLLLTQYSSQALHE</sequence>
<accession>Q9QZE2</accession>
<accession>Q8C479</accession>
<accession>Q9JMJ3</accession>
<evidence type="ECO:0000250" key="1">
    <source>
        <dbReference type="UniProtKB" id="Q7Z7G1"/>
    </source>
</evidence>
<evidence type="ECO:0000255" key="2">
    <source>
        <dbReference type="PROSITE-ProRule" id="PRU00191"/>
    </source>
</evidence>
<evidence type="ECO:0000256" key="3">
    <source>
        <dbReference type="SAM" id="MobiDB-lite"/>
    </source>
</evidence>
<evidence type="ECO:0000269" key="4">
    <source>
    </source>
</evidence>
<evidence type="ECO:0000269" key="5">
    <source>
    </source>
</evidence>
<evidence type="ECO:0000269" key="6">
    <source>
    </source>
</evidence>
<evidence type="ECO:0000269" key="7">
    <source>
    </source>
</evidence>
<evidence type="ECO:0000269" key="8">
    <source>
    </source>
</evidence>
<evidence type="ECO:0000269" key="9">
    <source>
    </source>
</evidence>
<evidence type="ECO:0000269" key="10">
    <source>
    </source>
</evidence>
<evidence type="ECO:0000269" key="11">
    <source>
    </source>
</evidence>
<evidence type="ECO:0000303" key="12">
    <source>
    </source>
</evidence>
<evidence type="ECO:0000305" key="13"/>
<evidence type="ECO:0007744" key="14">
    <source>
    </source>
</evidence>
<keyword id="KW-0025">Alternative splicing</keyword>
<keyword id="KW-0963">Cytoplasm</keyword>
<keyword id="KW-0597">Phosphoprotein</keyword>
<keyword id="KW-1185">Reference proteome</keyword>
<keyword id="KW-0727">SH2 domain</keyword>
<reference key="1">
    <citation type="journal article" date="1999" name="J. Exp. Med.">
        <title>Clnk, a novel SLP-76-related adaptor molecule expressed in cytokine-stimulated hemopoietic cells.</title>
        <authorList>
            <person name="Cao M.Y."/>
            <person name="Davidson D."/>
            <person name="Yu J."/>
            <person name="Latour S."/>
            <person name="Veillette A."/>
        </authorList>
    </citation>
    <scope>NUCLEOTIDE SEQUENCE [MRNA] (ISOFORM 1)</scope>
    <scope>FUNCTION</scope>
    <scope>SUBUNIT</scope>
    <scope>INDUCTION</scope>
    <scope>TISSUE SPECIFICITY</scope>
    <source>
        <strain>C57BL/6J</strain>
        <tissue>Fetal thymus</tissue>
    </source>
</reference>
<reference key="2">
    <citation type="journal article" date="2000" name="Int. Immunol.">
        <title>A BASH/SLP-76-related adaptor protein MIST/Clnk involved in IgE receptor-mediated mast cell degranulation.</title>
        <authorList>
            <person name="Goitsuka R."/>
            <person name="Kanazashi H."/>
            <person name="Sasanuma H."/>
            <person name="Fujimura Y.-C."/>
            <person name="Hidaka Y."/>
            <person name="Tatsuno A."/>
            <person name="Ra C."/>
            <person name="Hayashi K."/>
            <person name="Kitamura D."/>
        </authorList>
    </citation>
    <scope>NUCLEOTIDE SEQUENCE [MRNA] (ISOFORM 1)</scope>
    <scope>IDENTIFICATION OF ISOFORM 2</scope>
    <scope>FUNCTION</scope>
    <scope>TISSUE SPECIFICITY</scope>
    <scope>PHOSPHORYLATION</scope>
    <scope>INTERACTION WITH PLCG2; FRB2; VAV AND LAT</scope>
    <scope>MUTAGENESIS OF TYR-69; TYR-96; TYR-101; TYR-153; TYR-174 AND TYR-188</scope>
</reference>
<reference key="3">
    <citation type="journal article" date="2004" name="Genome Res.">
        <title>The status, quality, and expansion of the NIH full-length cDNA project: the Mammalian Gene Collection (MGC).</title>
        <authorList>
            <consortium name="The MGC Project Team"/>
        </authorList>
    </citation>
    <scope>NUCLEOTIDE SEQUENCE [LARGE SCALE MRNA]</scope>
    <source>
        <tissue>Brain</tissue>
    </source>
</reference>
<reference key="4">
    <citation type="journal article" date="2005" name="Science">
        <title>The transcriptional landscape of the mammalian genome.</title>
        <authorList>
            <person name="Carninci P."/>
            <person name="Kasukawa T."/>
            <person name="Katayama S."/>
            <person name="Gough J."/>
            <person name="Frith M.C."/>
            <person name="Maeda N."/>
            <person name="Oyama R."/>
            <person name="Ravasi T."/>
            <person name="Lenhard B."/>
            <person name="Wells C."/>
            <person name="Kodzius R."/>
            <person name="Shimokawa K."/>
            <person name="Bajic V.B."/>
            <person name="Brenner S.E."/>
            <person name="Batalov S."/>
            <person name="Forrest A.R."/>
            <person name="Zavolan M."/>
            <person name="Davis M.J."/>
            <person name="Wilming L.G."/>
            <person name="Aidinis V."/>
            <person name="Allen J.E."/>
            <person name="Ambesi-Impiombato A."/>
            <person name="Apweiler R."/>
            <person name="Aturaliya R.N."/>
            <person name="Bailey T.L."/>
            <person name="Bansal M."/>
            <person name="Baxter L."/>
            <person name="Beisel K.W."/>
            <person name="Bersano T."/>
            <person name="Bono H."/>
            <person name="Chalk A.M."/>
            <person name="Chiu K.P."/>
            <person name="Choudhary V."/>
            <person name="Christoffels A."/>
            <person name="Clutterbuck D.R."/>
            <person name="Crowe M.L."/>
            <person name="Dalla E."/>
            <person name="Dalrymple B.P."/>
            <person name="de Bono B."/>
            <person name="Della Gatta G."/>
            <person name="di Bernardo D."/>
            <person name="Down T."/>
            <person name="Engstrom P."/>
            <person name="Fagiolini M."/>
            <person name="Faulkner G."/>
            <person name="Fletcher C.F."/>
            <person name="Fukushima T."/>
            <person name="Furuno M."/>
            <person name="Futaki S."/>
            <person name="Gariboldi M."/>
            <person name="Georgii-Hemming P."/>
            <person name="Gingeras T.R."/>
            <person name="Gojobori T."/>
            <person name="Green R.E."/>
            <person name="Gustincich S."/>
            <person name="Harbers M."/>
            <person name="Hayashi Y."/>
            <person name="Hensch T.K."/>
            <person name="Hirokawa N."/>
            <person name="Hill D."/>
            <person name="Huminiecki L."/>
            <person name="Iacono M."/>
            <person name="Ikeo K."/>
            <person name="Iwama A."/>
            <person name="Ishikawa T."/>
            <person name="Jakt M."/>
            <person name="Kanapin A."/>
            <person name="Katoh M."/>
            <person name="Kawasawa Y."/>
            <person name="Kelso J."/>
            <person name="Kitamura H."/>
            <person name="Kitano H."/>
            <person name="Kollias G."/>
            <person name="Krishnan S.P."/>
            <person name="Kruger A."/>
            <person name="Kummerfeld S.K."/>
            <person name="Kurochkin I.V."/>
            <person name="Lareau L.F."/>
            <person name="Lazarevic D."/>
            <person name="Lipovich L."/>
            <person name="Liu J."/>
            <person name="Liuni S."/>
            <person name="McWilliam S."/>
            <person name="Madan Babu M."/>
            <person name="Madera M."/>
            <person name="Marchionni L."/>
            <person name="Matsuda H."/>
            <person name="Matsuzawa S."/>
            <person name="Miki H."/>
            <person name="Mignone F."/>
            <person name="Miyake S."/>
            <person name="Morris K."/>
            <person name="Mottagui-Tabar S."/>
            <person name="Mulder N."/>
            <person name="Nakano N."/>
            <person name="Nakauchi H."/>
            <person name="Ng P."/>
            <person name="Nilsson R."/>
            <person name="Nishiguchi S."/>
            <person name="Nishikawa S."/>
            <person name="Nori F."/>
            <person name="Ohara O."/>
            <person name="Okazaki Y."/>
            <person name="Orlando V."/>
            <person name="Pang K.C."/>
            <person name="Pavan W.J."/>
            <person name="Pavesi G."/>
            <person name="Pesole G."/>
            <person name="Petrovsky N."/>
            <person name="Piazza S."/>
            <person name="Reed J."/>
            <person name="Reid J.F."/>
            <person name="Ring B.Z."/>
            <person name="Ringwald M."/>
            <person name="Rost B."/>
            <person name="Ruan Y."/>
            <person name="Salzberg S.L."/>
            <person name="Sandelin A."/>
            <person name="Schneider C."/>
            <person name="Schoenbach C."/>
            <person name="Sekiguchi K."/>
            <person name="Semple C.A."/>
            <person name="Seno S."/>
            <person name="Sessa L."/>
            <person name="Sheng Y."/>
            <person name="Shibata Y."/>
            <person name="Shimada H."/>
            <person name="Shimada K."/>
            <person name="Silva D."/>
            <person name="Sinclair B."/>
            <person name="Sperling S."/>
            <person name="Stupka E."/>
            <person name="Sugiura K."/>
            <person name="Sultana R."/>
            <person name="Takenaka Y."/>
            <person name="Taki K."/>
            <person name="Tammoja K."/>
            <person name="Tan S.L."/>
            <person name="Tang S."/>
            <person name="Taylor M.S."/>
            <person name="Tegner J."/>
            <person name="Teichmann S.A."/>
            <person name="Ueda H.R."/>
            <person name="van Nimwegen E."/>
            <person name="Verardo R."/>
            <person name="Wei C.L."/>
            <person name="Yagi K."/>
            <person name="Yamanishi H."/>
            <person name="Zabarovsky E."/>
            <person name="Zhu S."/>
            <person name="Zimmer A."/>
            <person name="Hide W."/>
            <person name="Bult C."/>
            <person name="Grimmond S.M."/>
            <person name="Teasdale R.D."/>
            <person name="Liu E.T."/>
            <person name="Brusic V."/>
            <person name="Quackenbush J."/>
            <person name="Wahlestedt C."/>
            <person name="Mattick J.S."/>
            <person name="Hume D.A."/>
            <person name="Kai C."/>
            <person name="Sasaki D."/>
            <person name="Tomaru Y."/>
            <person name="Fukuda S."/>
            <person name="Kanamori-Katayama M."/>
            <person name="Suzuki M."/>
            <person name="Aoki J."/>
            <person name="Arakawa T."/>
            <person name="Iida J."/>
            <person name="Imamura K."/>
            <person name="Itoh M."/>
            <person name="Kato T."/>
            <person name="Kawaji H."/>
            <person name="Kawagashira N."/>
            <person name="Kawashima T."/>
            <person name="Kojima M."/>
            <person name="Kondo S."/>
            <person name="Konno H."/>
            <person name="Nakano K."/>
            <person name="Ninomiya N."/>
            <person name="Nishio T."/>
            <person name="Okada M."/>
            <person name="Plessy C."/>
            <person name="Shibata K."/>
            <person name="Shiraki T."/>
            <person name="Suzuki S."/>
            <person name="Tagami M."/>
            <person name="Waki K."/>
            <person name="Watahiki A."/>
            <person name="Okamura-Oho Y."/>
            <person name="Suzuki H."/>
            <person name="Kawai J."/>
            <person name="Hayashizaki Y."/>
        </authorList>
    </citation>
    <scope>NUCLEOTIDE SEQUENCE [LARGE SCALE MRNA] OF 44-435</scope>
    <source>
        <strain>C57BL/6J</strain>
    </source>
</reference>
<reference key="5">
    <citation type="journal article" date="2001" name="J. Biol. Chem.">
        <title>MIST functions through distinct domains in immunoreceptor signaling in the presence and absence of LAT.</title>
        <authorList>
            <person name="Goitsuka R."/>
            <person name="Tatsuno A."/>
            <person name="Ishiai M."/>
            <person name="Kurosaki T."/>
            <person name="Kitamura D."/>
        </authorList>
    </citation>
    <scope>FUNCTION</scope>
    <scope>DOMAIN</scope>
    <scope>PHOSPHORYLATION AT TYR-69 AND TYR-96</scope>
    <scope>INTERACTION WITH GRB2; PLCG1; PLCG2 AND LAT</scope>
    <scope>MUTAGENESIS OF TYR-69; TYR-96; TYR-101; TYR-153; TYR-174 AND TYR-188</scope>
</reference>
<reference key="6">
    <citation type="journal article" date="2001" name="Mol. Cell. Biol.">
        <title>Synergistic regulation of immunoreceptor signaling by SLP-76-related adaptor Clnk and serine/threonine protein kinase HPK-1.</title>
        <authorList>
            <person name="Yu J."/>
            <person name="Riou C."/>
            <person name="Davidson D."/>
            <person name="Minhas R."/>
            <person name="Robson J.D."/>
            <person name="Julius M."/>
            <person name="Arnold R."/>
            <person name="Kiefer F."/>
            <person name="Veillette A."/>
        </authorList>
    </citation>
    <scope>FUNCTION</scope>
    <scope>INTERACTION WITH MAP4K1</scope>
    <scope>TISSUE SPECIFICITY</scope>
    <scope>MUTAGENESIS OF ARG-335</scope>
</reference>
<reference key="7">
    <citation type="journal article" date="2003" name="FEBS Lett.">
        <title>Targeting of MIST to Src-family kinases via SKAP55-SLAP-130 adaptor complex in mast cells(1).</title>
        <authorList>
            <person name="Fujii Y."/>
            <person name="Wakahara S."/>
            <person name="Nakao T."/>
            <person name="Hara T."/>
            <person name="Ohtake H."/>
            <person name="Komurasaki T."/>
            <person name="Kitamura K."/>
            <person name="Tatsuno A."/>
            <person name="Fujiwara N."/>
            <person name="Hozumi N."/>
            <person name="Ra C."/>
            <person name="Kitamura D."/>
            <person name="Goitsuka R."/>
        </authorList>
    </citation>
    <scope>FUNCTION</scope>
    <scope>INTERACTION WITH FYB1</scope>
    <scope>IDENTIFICATION IN A COMPLEX WITH FYB1 AND SKAP1</scope>
    <scope>PHOSPHORYLATION</scope>
    <scope>MUTAGENESIS OF ARG-335</scope>
</reference>
<reference key="8">
    <citation type="journal article" date="2004" name="Mol. Cell. Biol.">
        <title>Immune functions in mice lacking Clnk, an SLP-76-related adaptor expressed in a subset of immune cells.</title>
        <authorList>
            <person name="Utting O."/>
            <person name="Sedgmen B.J."/>
            <person name="Watts T.H."/>
            <person name="Shi X."/>
            <person name="Rottapel R."/>
            <person name="Iulianella A."/>
            <person name="Lohnes D."/>
            <person name="Veillette A."/>
        </authorList>
    </citation>
    <scope>FUNCTION</scope>
    <scope>TISSUE SPECIFICITY</scope>
    <scope>INDUCTION</scope>
    <scope>DISRUPTION PHENOTYPE</scope>
</reference>
<reference key="9">
    <citation type="journal article" date="2006" name="Blood">
        <title>Dual function for the adaptor MIST in IFN-gamma production by NK and CD4+NKT cells regulated by the Src kinase Fgr.</title>
        <authorList>
            <person name="Sasanuma H."/>
            <person name="Tatsuno A."/>
            <person name="Hidano S."/>
            <person name="Ohshima K."/>
            <person name="Matsuzaki Y."/>
            <person name="Hayashi K."/>
            <person name="Lowell C.A."/>
            <person name="Kitamura D."/>
            <person name="Goitsuka R."/>
        </authorList>
    </citation>
    <scope>FUNCTION</scope>
    <scope>INTERACTION WITH FGR</scope>
    <scope>TISSUE SPECIFICITY</scope>
    <scope>INDUCTION</scope>
    <scope>DISRUPTION PHENOTYPE</scope>
    <scope>MUTAGENESIS OF TYR-69; TYR-96; TYR-101; TYR-153; 160-PRO--PRO-165; TYR-174; 178-PRO--PRO-182; TYR-188 AND ARG-335</scope>
</reference>
<reference key="10">
    <citation type="journal article" date="2007" name="J. Immunol.">
        <title>Quantitative time-resolved phosphoproteomic analysis of mast cell signaling.</title>
        <authorList>
            <person name="Cao L."/>
            <person name="Yu K."/>
            <person name="Banh C."/>
            <person name="Nguyen V."/>
            <person name="Ritz A."/>
            <person name="Raphael B.J."/>
            <person name="Kawakami Y."/>
            <person name="Kawakami T."/>
            <person name="Salomon A.R."/>
        </authorList>
    </citation>
    <scope>PHOSPHORYLATION [LARGE SCALE ANALYSIS] AT TYR-69</scope>
    <scope>IDENTIFICATION BY MASS SPECTROMETRY [LARGE SCALE ANALYSIS]</scope>
    <source>
        <tissue>Mast cell</tissue>
    </source>
</reference>
<reference key="11">
    <citation type="journal article" date="2015" name="Biochem. Biophys. Res. Commun.">
        <title>Clnk plays a role in TNF-alpha-induced cell death in murine fibrosarcoma cell line L929.</title>
        <authorList>
            <person name="Xu M."/>
            <person name="Cai C."/>
            <person name="Sun X."/>
            <person name="Chen W."/>
            <person name="Li Q."/>
            <person name="Zhou H."/>
        </authorList>
    </citation>
    <scope>FUNCTION</scope>
    <scope>INTERACTION WITH LBR AND AGO2</scope>
</reference>
<name>CLNK_MOUSE</name>